<accession>Q5HQ14</accession>
<name>MRAZ_STAEQ</name>
<evidence type="ECO:0000255" key="1">
    <source>
        <dbReference type="HAMAP-Rule" id="MF_01008"/>
    </source>
</evidence>
<evidence type="ECO:0000255" key="2">
    <source>
        <dbReference type="PROSITE-ProRule" id="PRU01076"/>
    </source>
</evidence>
<reference key="1">
    <citation type="journal article" date="2005" name="J. Bacteriol.">
        <title>Insights on evolution of virulence and resistance from the complete genome analysis of an early methicillin-resistant Staphylococcus aureus strain and a biofilm-producing methicillin-resistant Staphylococcus epidermidis strain.</title>
        <authorList>
            <person name="Gill S.R."/>
            <person name="Fouts D.E."/>
            <person name="Archer G.L."/>
            <person name="Mongodin E.F."/>
            <person name="DeBoy R.T."/>
            <person name="Ravel J."/>
            <person name="Paulsen I.T."/>
            <person name="Kolonay J.F."/>
            <person name="Brinkac L.M."/>
            <person name="Beanan M.J."/>
            <person name="Dodson R.J."/>
            <person name="Daugherty S.C."/>
            <person name="Madupu R."/>
            <person name="Angiuoli S.V."/>
            <person name="Durkin A.S."/>
            <person name="Haft D.H."/>
            <person name="Vamathevan J.J."/>
            <person name="Khouri H."/>
            <person name="Utterback T.R."/>
            <person name="Lee C."/>
            <person name="Dimitrov G."/>
            <person name="Jiang L."/>
            <person name="Qin H."/>
            <person name="Weidman J."/>
            <person name="Tran K."/>
            <person name="Kang K.H."/>
            <person name="Hance I.R."/>
            <person name="Nelson K.E."/>
            <person name="Fraser C.M."/>
        </authorList>
    </citation>
    <scope>NUCLEOTIDE SEQUENCE [LARGE SCALE GENOMIC DNA]</scope>
    <source>
        <strain>ATCC 35984 / DSM 28319 / BCRC 17069 / CCUG 31568 / BM 3577 / RP62A</strain>
    </source>
</reference>
<keyword id="KW-0963">Cytoplasm</keyword>
<keyword id="KW-0238">DNA-binding</keyword>
<keyword id="KW-1185">Reference proteome</keyword>
<keyword id="KW-0677">Repeat</keyword>
<keyword id="KW-0804">Transcription</keyword>
<keyword id="KW-0805">Transcription regulation</keyword>
<sequence>MFMGEFDHQLDTKGRMIIPSKFRYDLNERFIITRGLDKCLFGYTLEEWQQIEEKMKTLPMTKKDARKFMRMFFSGAVEVELDKQGRINIPQNLRKYANLSKECTVIGVSNRIEIWDRETWNDFYDESEESFEDIAEDLIDFDF</sequence>
<organism>
    <name type="scientific">Staphylococcus epidermidis (strain ATCC 35984 / DSM 28319 / BCRC 17069 / CCUG 31568 / BM 3577 / RP62A)</name>
    <dbReference type="NCBI Taxonomy" id="176279"/>
    <lineage>
        <taxon>Bacteria</taxon>
        <taxon>Bacillati</taxon>
        <taxon>Bacillota</taxon>
        <taxon>Bacilli</taxon>
        <taxon>Bacillales</taxon>
        <taxon>Staphylococcaceae</taxon>
        <taxon>Staphylococcus</taxon>
    </lineage>
</organism>
<comment type="subunit">
    <text evidence="1">Forms oligomers.</text>
</comment>
<comment type="subcellular location">
    <subcellularLocation>
        <location evidence="1">Cytoplasm</location>
        <location evidence="1">Nucleoid</location>
    </subcellularLocation>
</comment>
<comment type="similarity">
    <text evidence="1">Belongs to the MraZ family.</text>
</comment>
<protein>
    <recommendedName>
        <fullName>Transcriptional regulator MraZ</fullName>
    </recommendedName>
</protein>
<gene>
    <name evidence="1" type="primary">mraZ</name>
    <name type="ordered locus">SERP0743</name>
</gene>
<dbReference type="EMBL" id="CP000029">
    <property type="protein sequence ID" value="AAW54123.1"/>
    <property type="molecule type" value="Genomic_DNA"/>
</dbReference>
<dbReference type="RefSeq" id="WP_001830185.1">
    <property type="nucleotide sequence ID" value="NC_002976.3"/>
</dbReference>
<dbReference type="SMR" id="Q5HQ14"/>
<dbReference type="STRING" id="176279.SERP0743"/>
<dbReference type="GeneID" id="50019008"/>
<dbReference type="KEGG" id="ser:SERP0743"/>
<dbReference type="eggNOG" id="COG2001">
    <property type="taxonomic scope" value="Bacteria"/>
</dbReference>
<dbReference type="HOGENOM" id="CLU_107907_0_5_9"/>
<dbReference type="Proteomes" id="UP000000531">
    <property type="component" value="Chromosome"/>
</dbReference>
<dbReference type="GO" id="GO:0005737">
    <property type="term" value="C:cytoplasm"/>
    <property type="evidence" value="ECO:0007669"/>
    <property type="project" value="UniProtKB-UniRule"/>
</dbReference>
<dbReference type="GO" id="GO:0009295">
    <property type="term" value="C:nucleoid"/>
    <property type="evidence" value="ECO:0007669"/>
    <property type="project" value="UniProtKB-SubCell"/>
</dbReference>
<dbReference type="GO" id="GO:0003700">
    <property type="term" value="F:DNA-binding transcription factor activity"/>
    <property type="evidence" value="ECO:0007669"/>
    <property type="project" value="UniProtKB-UniRule"/>
</dbReference>
<dbReference type="GO" id="GO:0000976">
    <property type="term" value="F:transcription cis-regulatory region binding"/>
    <property type="evidence" value="ECO:0007669"/>
    <property type="project" value="TreeGrafter"/>
</dbReference>
<dbReference type="GO" id="GO:2000143">
    <property type="term" value="P:negative regulation of DNA-templated transcription initiation"/>
    <property type="evidence" value="ECO:0007669"/>
    <property type="project" value="TreeGrafter"/>
</dbReference>
<dbReference type="CDD" id="cd16321">
    <property type="entry name" value="MraZ_C"/>
    <property type="match status" value="1"/>
</dbReference>
<dbReference type="CDD" id="cd16320">
    <property type="entry name" value="MraZ_N"/>
    <property type="match status" value="1"/>
</dbReference>
<dbReference type="FunFam" id="3.40.1550.20:FF:000002">
    <property type="entry name" value="Transcriptional regulator MraZ"/>
    <property type="match status" value="1"/>
</dbReference>
<dbReference type="Gene3D" id="3.40.1550.20">
    <property type="entry name" value="Transcriptional regulator MraZ domain"/>
    <property type="match status" value="1"/>
</dbReference>
<dbReference type="HAMAP" id="MF_01008">
    <property type="entry name" value="MraZ"/>
    <property type="match status" value="1"/>
</dbReference>
<dbReference type="InterPro" id="IPR003444">
    <property type="entry name" value="MraZ"/>
</dbReference>
<dbReference type="InterPro" id="IPR035644">
    <property type="entry name" value="MraZ_C"/>
</dbReference>
<dbReference type="InterPro" id="IPR020603">
    <property type="entry name" value="MraZ_dom"/>
</dbReference>
<dbReference type="InterPro" id="IPR035642">
    <property type="entry name" value="MraZ_N"/>
</dbReference>
<dbReference type="InterPro" id="IPR038619">
    <property type="entry name" value="MraZ_sf"/>
</dbReference>
<dbReference type="InterPro" id="IPR007159">
    <property type="entry name" value="SpoVT-AbrB_dom"/>
</dbReference>
<dbReference type="InterPro" id="IPR037914">
    <property type="entry name" value="SpoVT-AbrB_sf"/>
</dbReference>
<dbReference type="NCBIfam" id="TIGR00242">
    <property type="entry name" value="division/cell wall cluster transcriptional repressor MraZ"/>
    <property type="match status" value="1"/>
</dbReference>
<dbReference type="PANTHER" id="PTHR34701">
    <property type="entry name" value="TRANSCRIPTIONAL REGULATOR MRAZ"/>
    <property type="match status" value="1"/>
</dbReference>
<dbReference type="PANTHER" id="PTHR34701:SF1">
    <property type="entry name" value="TRANSCRIPTIONAL REGULATOR MRAZ"/>
    <property type="match status" value="1"/>
</dbReference>
<dbReference type="Pfam" id="PF02381">
    <property type="entry name" value="MraZ"/>
    <property type="match status" value="2"/>
</dbReference>
<dbReference type="SUPFAM" id="SSF89447">
    <property type="entry name" value="AbrB/MazE/MraZ-like"/>
    <property type="match status" value="1"/>
</dbReference>
<dbReference type="PROSITE" id="PS51740">
    <property type="entry name" value="SPOVT_ABRB"/>
    <property type="match status" value="2"/>
</dbReference>
<proteinExistence type="inferred from homology"/>
<feature type="chain" id="PRO_0000108546" description="Transcriptional regulator MraZ">
    <location>
        <begin position="1"/>
        <end position="143"/>
    </location>
</feature>
<feature type="domain" description="SpoVT-AbrB 1" evidence="2">
    <location>
        <begin position="5"/>
        <end position="47"/>
    </location>
</feature>
<feature type="domain" description="SpoVT-AbrB 2" evidence="2">
    <location>
        <begin position="76"/>
        <end position="119"/>
    </location>
</feature>